<accession>P29398</accession>
<keyword id="KW-0240">DNA-directed RNA polymerase</keyword>
<keyword id="KW-0548">Nucleotidyltransferase</keyword>
<keyword id="KW-1185">Reference proteome</keyword>
<keyword id="KW-0804">Transcription</keyword>
<keyword id="KW-0808">Transferase</keyword>
<sequence>MKEISCGRRTRVSFGKSREPLPIPDLVEIQKSSYRRFLEEGLLEVLKKFSPIYSQATRSDLRKSDRGFALEFVSTRTGEPAIDPLECKAKGLTYSVPIYATARLTDMKSGEMKEEEVFLGYIPYMTDRGTFIINGAERVVVNQIVVSPGLYFSSEYIDREEYGGYFLPSRGAWLEVILDPYDGVLYAGLDGKKVNLFLFLKTIGYEKDEDILSLYPTYLDADDEDSLLLHVGSILLEDIYDGGRKIAEKWDILTKDLAERILMIDDINQIKIVHPIAQNTFEKMLEVVSSSSEEGEEEEEKTKIYGLNEVTVVDAYLEIFRRLRPEELPRINAAKRYLHDLFFNPERYDLSEVGRYKVNERLRNAYIRYLIEVEGEDPEEARKKVYNETSLVLKPLDIVLASRILFDYFERRYVNDFEIDSYELKNLIRIFKEEYLEKRKTAPYDLRKLVSVFRRNYGVTSDLGVFAAIRYVSNINKELPSIPFDTKDHLGNKRVRTVGELVQREFERLFARAQKAIQERLTLINSLSKVSIQSLINIKSIISTVNQFFAMNQLSQFMDQVNPLSELTHKRRVSAVGPGGLRRESKVFEARNVHYSQYGRLCPIETPEGANIGFITSLAIYAKIDEYGFLMTPYRKVVNGKVTDEVVYLRANEEEEYKIIPATTPVDEEGNIIPERVVARMGEDIRLVPKEEVDFMDVSTKQPFSVSASLIPFLEHDDASRALMGSNMQRQAVPLLKTEAPLVGTGMEWEAAKNSGYVILAEHDGIVKEVDAARVVVHRTDENGNLMYDDKGNPVVDEYRLLKFVRSNQDTMINQKPIVNEGDFVKKGDPIADGPATDMGELALGRNILVAFMPWEGYNYEDAILVSQELLEEDVFTSIHIEVYETQARETRLGPEEITADIPNVSKELLKNLDENGIIRVGAYVVSDYGVGSQAILVGKVTPKGEGDTTPEEKIIRSVFGERGRDVKDTSLRLPHGVEGRVIRVDVYDQNDIAELGAGVLKLVRVYVASRKTLDIGDKLAGRHGNKGVVSNILPKEDMPFLPDGTPVQMVLNPLGIPSRMNVGQILETHLGWLAKLTGKWFATPVFEGAKEDEILRPLYEERKKRGLHLGDDENNPNGKVVLRDGRTGEPFDNPVVVGYMYMLKLIHIAKEKIHARSTGPYSLIHQQPLGGKSHFGGQRLGEMEVWALEAYGAAHTLAEMLTIKSDDIKGRNEAYKAILKNMNIPEPGVPESFRVLIKELRGLALDVRLYDENGNEIDIDKY</sequence>
<feature type="chain" id="PRO_0000047984" description="DNA-directed RNA polymerase subunit beta">
    <location>
        <begin position="1"/>
        <end position="1263"/>
    </location>
</feature>
<evidence type="ECO:0000255" key="1">
    <source>
        <dbReference type="HAMAP-Rule" id="MF_01321"/>
    </source>
</evidence>
<gene>
    <name evidence="1" type="primary">rpoB</name>
    <name type="ordered locus">TM_0458</name>
</gene>
<comment type="function">
    <text>DNA-dependent RNA polymerase catalyzes the transcription of DNA into RNA using the four ribonucleoside triphosphates as substrates.</text>
</comment>
<comment type="catalytic activity">
    <reaction evidence="1">
        <text>RNA(n) + a ribonucleoside 5'-triphosphate = RNA(n+1) + diphosphate</text>
        <dbReference type="Rhea" id="RHEA:21248"/>
        <dbReference type="Rhea" id="RHEA-COMP:14527"/>
        <dbReference type="Rhea" id="RHEA-COMP:17342"/>
        <dbReference type="ChEBI" id="CHEBI:33019"/>
        <dbReference type="ChEBI" id="CHEBI:61557"/>
        <dbReference type="ChEBI" id="CHEBI:140395"/>
        <dbReference type="EC" id="2.7.7.6"/>
    </reaction>
</comment>
<comment type="subunit">
    <text evidence="1">The RNAP catalytic core consists of 2 alpha, 1 beta, 1 beta' and 1 omega subunit. When a sigma factor is associated with the core the holoenzyme is formed, which can initiate transcription.</text>
</comment>
<comment type="similarity">
    <text evidence="1">Belongs to the RNA polymerase beta chain family.</text>
</comment>
<dbReference type="EC" id="2.7.7.6" evidence="1"/>
<dbReference type="EMBL" id="X72695">
    <property type="protein sequence ID" value="CAA51246.1"/>
    <property type="molecule type" value="Genomic_DNA"/>
</dbReference>
<dbReference type="EMBL" id="AE000512">
    <property type="protein sequence ID" value="AAD35543.1"/>
    <property type="molecule type" value="Genomic_DNA"/>
</dbReference>
<dbReference type="EMBL" id="Z11839">
    <property type="protein sequence ID" value="CAA77863.1"/>
    <property type="molecule type" value="Genomic_DNA"/>
</dbReference>
<dbReference type="PIR" id="S41466">
    <property type="entry name" value="F44466"/>
</dbReference>
<dbReference type="RefSeq" id="NP_228268.1">
    <property type="nucleotide sequence ID" value="NC_000853.1"/>
</dbReference>
<dbReference type="RefSeq" id="WP_004081508.1">
    <property type="nucleotide sequence ID" value="NC_000853.1"/>
</dbReference>
<dbReference type="SMR" id="P29398"/>
<dbReference type="FunCoup" id="P29398">
    <property type="interactions" value="358"/>
</dbReference>
<dbReference type="STRING" id="243274.TM_0458"/>
<dbReference type="PaxDb" id="243274-THEMA_02400"/>
<dbReference type="EnsemblBacteria" id="AAD35543">
    <property type="protein sequence ID" value="AAD35543"/>
    <property type="gene ID" value="TM_0458"/>
</dbReference>
<dbReference type="KEGG" id="tma:TM0458"/>
<dbReference type="KEGG" id="tmi:THEMA_02400"/>
<dbReference type="KEGG" id="tmw:THMA_0468"/>
<dbReference type="PATRIC" id="fig|243274.18.peg.472"/>
<dbReference type="eggNOG" id="COG0085">
    <property type="taxonomic scope" value="Bacteria"/>
</dbReference>
<dbReference type="InParanoid" id="P29398"/>
<dbReference type="OrthoDB" id="9803954at2"/>
<dbReference type="Proteomes" id="UP000008183">
    <property type="component" value="Chromosome"/>
</dbReference>
<dbReference type="GO" id="GO:0000428">
    <property type="term" value="C:DNA-directed RNA polymerase complex"/>
    <property type="evidence" value="ECO:0007669"/>
    <property type="project" value="UniProtKB-KW"/>
</dbReference>
<dbReference type="GO" id="GO:0003677">
    <property type="term" value="F:DNA binding"/>
    <property type="evidence" value="ECO:0007669"/>
    <property type="project" value="UniProtKB-UniRule"/>
</dbReference>
<dbReference type="GO" id="GO:0003899">
    <property type="term" value="F:DNA-directed RNA polymerase activity"/>
    <property type="evidence" value="ECO:0007669"/>
    <property type="project" value="UniProtKB-UniRule"/>
</dbReference>
<dbReference type="GO" id="GO:0032549">
    <property type="term" value="F:ribonucleoside binding"/>
    <property type="evidence" value="ECO:0007669"/>
    <property type="project" value="InterPro"/>
</dbReference>
<dbReference type="GO" id="GO:0006351">
    <property type="term" value="P:DNA-templated transcription"/>
    <property type="evidence" value="ECO:0007669"/>
    <property type="project" value="UniProtKB-UniRule"/>
</dbReference>
<dbReference type="CDD" id="cd00653">
    <property type="entry name" value="RNA_pol_B_RPB2"/>
    <property type="match status" value="1"/>
</dbReference>
<dbReference type="Gene3D" id="2.40.50.100">
    <property type="match status" value="1"/>
</dbReference>
<dbReference type="Gene3D" id="2.40.50.150">
    <property type="match status" value="1"/>
</dbReference>
<dbReference type="Gene3D" id="3.90.1100.10">
    <property type="match status" value="2"/>
</dbReference>
<dbReference type="Gene3D" id="2.30.150.10">
    <property type="entry name" value="DNA-directed RNA polymerase, beta subunit, external 1 domain"/>
    <property type="match status" value="1"/>
</dbReference>
<dbReference type="Gene3D" id="2.40.270.10">
    <property type="entry name" value="DNA-directed RNA polymerase, subunit 2, domain 6"/>
    <property type="match status" value="1"/>
</dbReference>
<dbReference type="Gene3D" id="3.90.1800.10">
    <property type="entry name" value="RNA polymerase alpha subunit dimerisation domain"/>
    <property type="match status" value="1"/>
</dbReference>
<dbReference type="Gene3D" id="3.90.1110.10">
    <property type="entry name" value="RNA polymerase Rpb2, domain 2"/>
    <property type="match status" value="3"/>
</dbReference>
<dbReference type="HAMAP" id="MF_01321">
    <property type="entry name" value="RNApol_bact_RpoB"/>
    <property type="match status" value="1"/>
</dbReference>
<dbReference type="InterPro" id="IPR042107">
    <property type="entry name" value="DNA-dir_RNA_pol_bsu_ext_1_sf"/>
</dbReference>
<dbReference type="InterPro" id="IPR019462">
    <property type="entry name" value="DNA-dir_RNA_pol_bsu_external_1"/>
</dbReference>
<dbReference type="InterPro" id="IPR015712">
    <property type="entry name" value="DNA-dir_RNA_pol_su2"/>
</dbReference>
<dbReference type="InterPro" id="IPR007120">
    <property type="entry name" value="DNA-dir_RNAP_su2_dom"/>
</dbReference>
<dbReference type="InterPro" id="IPR037033">
    <property type="entry name" value="DNA-dir_RNAP_su2_hyb_sf"/>
</dbReference>
<dbReference type="InterPro" id="IPR010243">
    <property type="entry name" value="RNA_pol_bsu_bac"/>
</dbReference>
<dbReference type="InterPro" id="IPR007121">
    <property type="entry name" value="RNA_pol_bsu_CS"/>
</dbReference>
<dbReference type="InterPro" id="IPR007644">
    <property type="entry name" value="RNA_pol_bsu_protrusion"/>
</dbReference>
<dbReference type="InterPro" id="IPR037034">
    <property type="entry name" value="RNA_pol_Rpb2_2_sf"/>
</dbReference>
<dbReference type="InterPro" id="IPR007645">
    <property type="entry name" value="RNA_pol_Rpb2_3"/>
</dbReference>
<dbReference type="InterPro" id="IPR007641">
    <property type="entry name" value="RNA_pol_Rpb2_7"/>
</dbReference>
<dbReference type="InterPro" id="IPR014724">
    <property type="entry name" value="RNA_pol_RPB2_OB-fold"/>
</dbReference>
<dbReference type="NCBIfam" id="NF001616">
    <property type="entry name" value="PRK00405.1"/>
    <property type="match status" value="1"/>
</dbReference>
<dbReference type="NCBIfam" id="TIGR02013">
    <property type="entry name" value="rpoB"/>
    <property type="match status" value="1"/>
</dbReference>
<dbReference type="PANTHER" id="PTHR20856">
    <property type="entry name" value="DNA-DIRECTED RNA POLYMERASE I SUBUNIT 2"/>
    <property type="match status" value="1"/>
</dbReference>
<dbReference type="Pfam" id="PF04563">
    <property type="entry name" value="RNA_pol_Rpb2_1"/>
    <property type="match status" value="1"/>
</dbReference>
<dbReference type="Pfam" id="PF04565">
    <property type="entry name" value="RNA_pol_Rpb2_3"/>
    <property type="match status" value="1"/>
</dbReference>
<dbReference type="Pfam" id="PF10385">
    <property type="entry name" value="RNA_pol_Rpb2_45"/>
    <property type="match status" value="1"/>
</dbReference>
<dbReference type="Pfam" id="PF00562">
    <property type="entry name" value="RNA_pol_Rpb2_6"/>
    <property type="match status" value="1"/>
</dbReference>
<dbReference type="Pfam" id="PF04560">
    <property type="entry name" value="RNA_pol_Rpb2_7"/>
    <property type="match status" value="1"/>
</dbReference>
<dbReference type="SUPFAM" id="SSF64484">
    <property type="entry name" value="beta and beta-prime subunits of DNA dependent RNA-polymerase"/>
    <property type="match status" value="1"/>
</dbReference>
<dbReference type="PROSITE" id="PS01166">
    <property type="entry name" value="RNA_POL_BETA"/>
    <property type="match status" value="1"/>
</dbReference>
<organism>
    <name type="scientific">Thermotoga maritima (strain ATCC 43589 / DSM 3109 / JCM 10099 / NBRC 100826 / MSB8)</name>
    <dbReference type="NCBI Taxonomy" id="243274"/>
    <lineage>
        <taxon>Bacteria</taxon>
        <taxon>Thermotogati</taxon>
        <taxon>Thermotogota</taxon>
        <taxon>Thermotogae</taxon>
        <taxon>Thermotogales</taxon>
        <taxon>Thermotogaceae</taxon>
        <taxon>Thermotoga</taxon>
    </lineage>
</organism>
<name>RPOB_THEMA</name>
<proteinExistence type="inferred from homology"/>
<reference key="1">
    <citation type="journal article" date="1993" name="Nucleic Acids Res.">
        <title>The DNA-dependent RNA-polymerase of Thermotoga maritima; characterisation of the enzyme and the DNA-sequence of the genes for the large subunits.</title>
        <authorList>
            <person name="Palm P."/>
            <person name="Schleper C."/>
            <person name="Arnold-Ammer I."/>
            <person name="Holz I."/>
            <person name="Meier T."/>
            <person name="Lottspeich F."/>
            <person name="Zillig W."/>
        </authorList>
    </citation>
    <scope>NUCLEOTIDE SEQUENCE [GENOMIC DNA]</scope>
    <source>
        <strain>ATCC 43589 / DSM 3109 / JCM 10099 / NBRC 100826 / MSB8</strain>
    </source>
</reference>
<reference key="2">
    <citation type="journal article" date="1999" name="Nature">
        <title>Evidence for lateral gene transfer between Archaea and Bacteria from genome sequence of Thermotoga maritima.</title>
        <authorList>
            <person name="Nelson K.E."/>
            <person name="Clayton R.A."/>
            <person name="Gill S.R."/>
            <person name="Gwinn M.L."/>
            <person name="Dodson R.J."/>
            <person name="Haft D.H."/>
            <person name="Hickey E.K."/>
            <person name="Peterson J.D."/>
            <person name="Nelson W.C."/>
            <person name="Ketchum K.A."/>
            <person name="McDonald L.A."/>
            <person name="Utterback T.R."/>
            <person name="Malek J.A."/>
            <person name="Linher K.D."/>
            <person name="Garrett M.M."/>
            <person name="Stewart A.M."/>
            <person name="Cotton M.D."/>
            <person name="Pratt M.S."/>
            <person name="Phillips C.A."/>
            <person name="Richardson D.L."/>
            <person name="Heidelberg J.F."/>
            <person name="Sutton G.G."/>
            <person name="Fleischmann R.D."/>
            <person name="Eisen J.A."/>
            <person name="White O."/>
            <person name="Salzberg S.L."/>
            <person name="Smith H.O."/>
            <person name="Venter J.C."/>
            <person name="Fraser C.M."/>
        </authorList>
    </citation>
    <scope>NUCLEOTIDE SEQUENCE [LARGE SCALE GENOMIC DNA]</scope>
    <source>
        <strain>ATCC 43589 / DSM 3109 / JCM 10099 / NBRC 100826 / MSB8</strain>
    </source>
</reference>
<reference key="3">
    <citation type="journal article" date="1992" name="J. Biol. Chem.">
        <title>The organization and expression of essential transcription translation component genes in the extremely thermophilic eubacterium Thermotoga maritima.</title>
        <authorList>
            <person name="Liao D."/>
            <person name="Dennis P.P."/>
        </authorList>
    </citation>
    <scope>NUCLEOTIDE SEQUENCE [GENOMIC DNA] OF 1-404</scope>
    <source>
        <strain>ATCC 43589 / DSM 3109 / JCM 10099 / NBRC 100826 / MSB8</strain>
    </source>
</reference>
<protein>
    <recommendedName>
        <fullName evidence="1">DNA-directed RNA polymerase subunit beta</fullName>
        <shortName evidence="1">RNAP subunit beta</shortName>
        <ecNumber evidence="1">2.7.7.6</ecNumber>
    </recommendedName>
    <alternativeName>
        <fullName evidence="1">RNA polymerase subunit beta</fullName>
    </alternativeName>
    <alternativeName>
        <fullName evidence="1">Transcriptase subunit beta</fullName>
    </alternativeName>
</protein>